<organism>
    <name type="scientific">Salmonella typhimurium (strain LT2 / SGSC1412 / ATCC 700720)</name>
    <dbReference type="NCBI Taxonomy" id="99287"/>
    <lineage>
        <taxon>Bacteria</taxon>
        <taxon>Pseudomonadati</taxon>
        <taxon>Pseudomonadota</taxon>
        <taxon>Gammaproteobacteria</taxon>
        <taxon>Enterobacterales</taxon>
        <taxon>Enterobacteriaceae</taxon>
        <taxon>Salmonella</taxon>
    </lineage>
</organism>
<keyword id="KW-0378">Hydrolase</keyword>
<keyword id="KW-0479">Metal-binding</keyword>
<keyword id="KW-0659">Purine metabolism</keyword>
<keyword id="KW-1185">Reference proteome</keyword>
<keyword id="KW-0862">Zinc</keyword>
<accession>Q7CR08</accession>
<reference key="1">
    <citation type="journal article" date="2001" name="Nature">
        <title>Complete genome sequence of Salmonella enterica serovar Typhimurium LT2.</title>
        <authorList>
            <person name="McClelland M."/>
            <person name="Sanderson K.E."/>
            <person name="Spieth J."/>
            <person name="Clifton S.W."/>
            <person name="Latreille P."/>
            <person name="Courtney L."/>
            <person name="Porwollik S."/>
            <person name="Ali J."/>
            <person name="Dante M."/>
            <person name="Du F."/>
            <person name="Hou S."/>
            <person name="Layman D."/>
            <person name="Leonard S."/>
            <person name="Nguyen C."/>
            <person name="Scott K."/>
            <person name="Holmes A."/>
            <person name="Grewal N."/>
            <person name="Mulvaney E."/>
            <person name="Ryan E."/>
            <person name="Sun H."/>
            <person name="Florea L."/>
            <person name="Miller W."/>
            <person name="Stoneking T."/>
            <person name="Nhan M."/>
            <person name="Waterston R."/>
            <person name="Wilson R.K."/>
        </authorList>
    </citation>
    <scope>NUCLEOTIDE SEQUENCE [LARGE SCALE GENOMIC DNA]</scope>
    <source>
        <strain>LT2 / SGSC1412 / ATCC 700720</strain>
    </source>
</reference>
<sequence length="453" mass="49887">MSFDLIIKNGTVILENEARVIDIAVQGGKIAAIGENLGEAKNVLDATGLIVSPGMVDAHTHISEPGRTHWEGYETGTRAAAKGGITTMIEMPLNQLPATVDRETIELKFDAAKGKLTIDAAQLGGLVSYNLDRLHELDEVGVVGFKCFVATCGDRGIDNDFRDVNDWQFYKGAQKLGEMDQTVLVHCENALICDELGEEAKREGRVTAHDYVASRPVFTEVEAIRRVLYLAKAAGCRLHVCHISSPEGVEEVTRARQEGQDVTCESCPHYFVLDTDQFEEIGTLAKCSPPIRDQENQKGMWEKLFNGEIDCLVSDHSPCPPEMKAGNIMQAWGGIAGLQNCMDVMFDEAVQKRGMSLPMFGKLMATNAADIFGLKHKGRIAPGKDADLVFIQPDSSYVLKNEDLEYRHKVSPYVGRTIGARITKTILRGDVIYDIEHGFPVPPKGQFILKHQQ</sequence>
<protein>
    <recommendedName>
        <fullName evidence="1">Allantoinase</fullName>
        <ecNumber evidence="1">3.5.2.5</ecNumber>
    </recommendedName>
    <alternativeName>
        <fullName evidence="1">Allantoin-utilizing enzyme</fullName>
    </alternativeName>
</protein>
<name>ALLB_SALTY</name>
<proteinExistence type="inferred from homology"/>
<evidence type="ECO:0000255" key="1">
    <source>
        <dbReference type="HAMAP-Rule" id="MF_01645"/>
    </source>
</evidence>
<dbReference type="EC" id="3.5.2.5" evidence="1"/>
<dbReference type="EMBL" id="AE006468">
    <property type="protein sequence ID" value="AAL19477.1"/>
    <property type="molecule type" value="Genomic_DNA"/>
</dbReference>
<dbReference type="RefSeq" id="NP_459518.1">
    <property type="nucleotide sequence ID" value="NC_003197.2"/>
</dbReference>
<dbReference type="RefSeq" id="WP_000006865.1">
    <property type="nucleotide sequence ID" value="NC_003197.2"/>
</dbReference>
<dbReference type="SMR" id="Q7CR08"/>
<dbReference type="STRING" id="99287.STM0523"/>
<dbReference type="PaxDb" id="99287-STM0523"/>
<dbReference type="GeneID" id="1252043"/>
<dbReference type="KEGG" id="stm:STM0523"/>
<dbReference type="PATRIC" id="fig|99287.12.peg.556"/>
<dbReference type="HOGENOM" id="CLU_015572_4_2_6"/>
<dbReference type="OMA" id="HFNEPGR"/>
<dbReference type="PhylomeDB" id="Q7CR08"/>
<dbReference type="BioCyc" id="SENT99287:STM0523-MONOMER"/>
<dbReference type="UniPathway" id="UPA00395">
    <property type="reaction ID" value="UER00653"/>
</dbReference>
<dbReference type="Proteomes" id="UP000001014">
    <property type="component" value="Chromosome"/>
</dbReference>
<dbReference type="GO" id="GO:0005737">
    <property type="term" value="C:cytoplasm"/>
    <property type="evidence" value="ECO:0000318"/>
    <property type="project" value="GO_Central"/>
</dbReference>
<dbReference type="GO" id="GO:0004038">
    <property type="term" value="F:allantoinase activity"/>
    <property type="evidence" value="ECO:0000318"/>
    <property type="project" value="GO_Central"/>
</dbReference>
<dbReference type="GO" id="GO:0050897">
    <property type="term" value="F:cobalt ion binding"/>
    <property type="evidence" value="ECO:0007669"/>
    <property type="project" value="InterPro"/>
</dbReference>
<dbReference type="GO" id="GO:0008270">
    <property type="term" value="F:zinc ion binding"/>
    <property type="evidence" value="ECO:0007669"/>
    <property type="project" value="InterPro"/>
</dbReference>
<dbReference type="GO" id="GO:0000256">
    <property type="term" value="P:allantoin catabolic process"/>
    <property type="evidence" value="ECO:0007669"/>
    <property type="project" value="UniProtKB-UniRule"/>
</dbReference>
<dbReference type="GO" id="GO:0006145">
    <property type="term" value="P:purine nucleobase catabolic process"/>
    <property type="evidence" value="ECO:0000318"/>
    <property type="project" value="GO_Central"/>
</dbReference>
<dbReference type="CDD" id="cd01315">
    <property type="entry name" value="L-HYD_ALN"/>
    <property type="match status" value="1"/>
</dbReference>
<dbReference type="FunFam" id="3.20.20.140:FF:000013">
    <property type="entry name" value="Allantoinase"/>
    <property type="match status" value="1"/>
</dbReference>
<dbReference type="Gene3D" id="3.20.20.140">
    <property type="entry name" value="Metal-dependent hydrolases"/>
    <property type="match status" value="1"/>
</dbReference>
<dbReference type="HAMAP" id="MF_01645">
    <property type="entry name" value="Hydantoinase"/>
    <property type="match status" value="1"/>
</dbReference>
<dbReference type="InterPro" id="IPR017593">
    <property type="entry name" value="Allantoinase"/>
</dbReference>
<dbReference type="InterPro" id="IPR047604">
    <property type="entry name" value="Allantoinase_bact"/>
</dbReference>
<dbReference type="InterPro" id="IPR006680">
    <property type="entry name" value="Amidohydro-rel"/>
</dbReference>
<dbReference type="InterPro" id="IPR050138">
    <property type="entry name" value="DHOase/Allantoinase_Hydrolase"/>
</dbReference>
<dbReference type="InterPro" id="IPR011059">
    <property type="entry name" value="Metal-dep_hydrolase_composite"/>
</dbReference>
<dbReference type="InterPro" id="IPR032466">
    <property type="entry name" value="Metal_Hydrolase"/>
</dbReference>
<dbReference type="NCBIfam" id="TIGR03178">
    <property type="entry name" value="allantoinase"/>
    <property type="match status" value="1"/>
</dbReference>
<dbReference type="NCBIfam" id="NF005960">
    <property type="entry name" value="PRK08044.1"/>
    <property type="match status" value="1"/>
</dbReference>
<dbReference type="PANTHER" id="PTHR43668">
    <property type="entry name" value="ALLANTOINASE"/>
    <property type="match status" value="1"/>
</dbReference>
<dbReference type="PANTHER" id="PTHR43668:SF4">
    <property type="entry name" value="ALLANTOINASE"/>
    <property type="match status" value="1"/>
</dbReference>
<dbReference type="Pfam" id="PF01979">
    <property type="entry name" value="Amidohydro_1"/>
    <property type="match status" value="1"/>
</dbReference>
<dbReference type="SUPFAM" id="SSF51338">
    <property type="entry name" value="Composite domain of metallo-dependent hydrolases"/>
    <property type="match status" value="1"/>
</dbReference>
<dbReference type="SUPFAM" id="SSF51556">
    <property type="entry name" value="Metallo-dependent hydrolases"/>
    <property type="match status" value="1"/>
</dbReference>
<comment type="function">
    <text evidence="1">Catalyzes the conversion of allantoin (5-ureidohydantoin) to allantoic acid by hydrolytic cleavage of the five-member hydantoin ring.</text>
</comment>
<comment type="catalytic activity">
    <reaction evidence="1">
        <text>(S)-allantoin + H2O = allantoate + H(+)</text>
        <dbReference type="Rhea" id="RHEA:17029"/>
        <dbReference type="ChEBI" id="CHEBI:15377"/>
        <dbReference type="ChEBI" id="CHEBI:15378"/>
        <dbReference type="ChEBI" id="CHEBI:15678"/>
        <dbReference type="ChEBI" id="CHEBI:17536"/>
        <dbReference type="EC" id="3.5.2.5"/>
    </reaction>
</comment>
<comment type="cofactor">
    <cofactor evidence="1">
        <name>Zn(2+)</name>
        <dbReference type="ChEBI" id="CHEBI:29105"/>
    </cofactor>
    <text evidence="1">Binds 2 Zn(2+) ions per subunit.</text>
</comment>
<comment type="pathway">
    <text evidence="1">Nitrogen metabolism; (S)-allantoin degradation; allantoate from (S)-allantoin: step 1/1.</text>
</comment>
<comment type="subunit">
    <text evidence="1">Homotetramer.</text>
</comment>
<comment type="PTM">
    <text evidence="1">Carboxylation allows a single lysine to coordinate two zinc ions.</text>
</comment>
<comment type="similarity">
    <text evidence="1">Belongs to the metallo-dependent hydrolases superfamily. Allantoinase family.</text>
</comment>
<feature type="chain" id="PRO_0000317685" description="Allantoinase">
    <location>
        <begin position="1"/>
        <end position="453"/>
    </location>
</feature>
<feature type="binding site" evidence="1">
    <location>
        <position position="59"/>
    </location>
    <ligand>
        <name>Zn(2+)</name>
        <dbReference type="ChEBI" id="CHEBI:29105"/>
        <label>1</label>
    </ligand>
</feature>
<feature type="binding site" evidence="1">
    <location>
        <position position="61"/>
    </location>
    <ligand>
        <name>Zn(2+)</name>
        <dbReference type="ChEBI" id="CHEBI:29105"/>
        <label>1</label>
    </ligand>
</feature>
<feature type="binding site" description="via carbamate group" evidence="1">
    <location>
        <position position="146"/>
    </location>
    <ligand>
        <name>Zn(2+)</name>
        <dbReference type="ChEBI" id="CHEBI:29105"/>
        <label>1</label>
    </ligand>
</feature>
<feature type="binding site" description="via carbamate group" evidence="1">
    <location>
        <position position="146"/>
    </location>
    <ligand>
        <name>Zn(2+)</name>
        <dbReference type="ChEBI" id="CHEBI:29105"/>
        <label>2</label>
    </ligand>
</feature>
<feature type="binding site" evidence="1">
    <location>
        <position position="186"/>
    </location>
    <ligand>
        <name>Zn(2+)</name>
        <dbReference type="ChEBI" id="CHEBI:29105"/>
        <label>2</label>
    </ligand>
</feature>
<feature type="binding site" evidence="1">
    <location>
        <position position="242"/>
    </location>
    <ligand>
        <name>Zn(2+)</name>
        <dbReference type="ChEBI" id="CHEBI:29105"/>
        <label>2</label>
    </ligand>
</feature>
<feature type="binding site" evidence="1">
    <location>
        <position position="315"/>
    </location>
    <ligand>
        <name>Zn(2+)</name>
        <dbReference type="ChEBI" id="CHEBI:29105"/>
        <label>1</label>
    </ligand>
</feature>
<feature type="modified residue" description="N6-carboxylysine" evidence="1">
    <location>
        <position position="146"/>
    </location>
</feature>
<gene>
    <name evidence="1" type="primary">allB</name>
    <name type="ordered locus">STM0523</name>
</gene>